<organism>
    <name type="scientific">Shewanella piezotolerans (strain WP3 / JCM 13877)</name>
    <dbReference type="NCBI Taxonomy" id="225849"/>
    <lineage>
        <taxon>Bacteria</taxon>
        <taxon>Pseudomonadati</taxon>
        <taxon>Pseudomonadota</taxon>
        <taxon>Gammaproteobacteria</taxon>
        <taxon>Alteromonadales</taxon>
        <taxon>Shewanellaceae</taxon>
        <taxon>Shewanella</taxon>
    </lineage>
</organism>
<protein>
    <recommendedName>
        <fullName evidence="1">Iron-sulfur cluster insertion protein ErpA</fullName>
    </recommendedName>
</protein>
<dbReference type="EMBL" id="CP000472">
    <property type="protein sequence ID" value="ACJ30526.1"/>
    <property type="molecule type" value="Genomic_DNA"/>
</dbReference>
<dbReference type="RefSeq" id="WP_020913868.1">
    <property type="nucleotide sequence ID" value="NC_011566.1"/>
</dbReference>
<dbReference type="SMR" id="B8CQR0"/>
<dbReference type="STRING" id="225849.swp_3849"/>
<dbReference type="KEGG" id="swp:swp_3849"/>
<dbReference type="eggNOG" id="COG0316">
    <property type="taxonomic scope" value="Bacteria"/>
</dbReference>
<dbReference type="HOGENOM" id="CLU_069054_5_3_6"/>
<dbReference type="OrthoDB" id="9801228at2"/>
<dbReference type="Proteomes" id="UP000000753">
    <property type="component" value="Chromosome"/>
</dbReference>
<dbReference type="GO" id="GO:0005829">
    <property type="term" value="C:cytosol"/>
    <property type="evidence" value="ECO:0007669"/>
    <property type="project" value="TreeGrafter"/>
</dbReference>
<dbReference type="GO" id="GO:0051537">
    <property type="term" value="F:2 iron, 2 sulfur cluster binding"/>
    <property type="evidence" value="ECO:0007669"/>
    <property type="project" value="TreeGrafter"/>
</dbReference>
<dbReference type="GO" id="GO:0051539">
    <property type="term" value="F:4 iron, 4 sulfur cluster binding"/>
    <property type="evidence" value="ECO:0007669"/>
    <property type="project" value="TreeGrafter"/>
</dbReference>
<dbReference type="GO" id="GO:0005506">
    <property type="term" value="F:iron ion binding"/>
    <property type="evidence" value="ECO:0007669"/>
    <property type="project" value="UniProtKB-UniRule"/>
</dbReference>
<dbReference type="GO" id="GO:0016226">
    <property type="term" value="P:iron-sulfur cluster assembly"/>
    <property type="evidence" value="ECO:0007669"/>
    <property type="project" value="UniProtKB-UniRule"/>
</dbReference>
<dbReference type="FunFam" id="2.60.300.12:FF:000002">
    <property type="entry name" value="Iron-sulfur cluster insertion protein ErpA"/>
    <property type="match status" value="1"/>
</dbReference>
<dbReference type="Gene3D" id="2.60.300.12">
    <property type="entry name" value="HesB-like domain"/>
    <property type="match status" value="1"/>
</dbReference>
<dbReference type="HAMAP" id="MF_01380">
    <property type="entry name" value="Fe_S_insert_ErpA"/>
    <property type="match status" value="1"/>
</dbReference>
<dbReference type="InterPro" id="IPR000361">
    <property type="entry name" value="FeS_biogenesis"/>
</dbReference>
<dbReference type="InterPro" id="IPR016092">
    <property type="entry name" value="FeS_cluster_insertion"/>
</dbReference>
<dbReference type="InterPro" id="IPR017870">
    <property type="entry name" value="FeS_cluster_insertion_CS"/>
</dbReference>
<dbReference type="InterPro" id="IPR023063">
    <property type="entry name" value="FeS_cluster_insertion_RrpA"/>
</dbReference>
<dbReference type="InterPro" id="IPR035903">
    <property type="entry name" value="HesB-like_dom_sf"/>
</dbReference>
<dbReference type="NCBIfam" id="TIGR00049">
    <property type="entry name" value="iron-sulfur cluster assembly accessory protein"/>
    <property type="match status" value="1"/>
</dbReference>
<dbReference type="NCBIfam" id="NF010147">
    <property type="entry name" value="PRK13623.1"/>
    <property type="match status" value="1"/>
</dbReference>
<dbReference type="PANTHER" id="PTHR43011">
    <property type="entry name" value="IRON-SULFUR CLUSTER ASSEMBLY 2 HOMOLOG, MITOCHONDRIAL"/>
    <property type="match status" value="1"/>
</dbReference>
<dbReference type="PANTHER" id="PTHR43011:SF1">
    <property type="entry name" value="IRON-SULFUR CLUSTER ASSEMBLY 2 HOMOLOG, MITOCHONDRIAL"/>
    <property type="match status" value="1"/>
</dbReference>
<dbReference type="Pfam" id="PF01521">
    <property type="entry name" value="Fe-S_biosyn"/>
    <property type="match status" value="1"/>
</dbReference>
<dbReference type="SUPFAM" id="SSF89360">
    <property type="entry name" value="HesB-like domain"/>
    <property type="match status" value="1"/>
</dbReference>
<dbReference type="PROSITE" id="PS01152">
    <property type="entry name" value="HESB"/>
    <property type="match status" value="1"/>
</dbReference>
<gene>
    <name evidence="1" type="primary">erpA</name>
    <name type="ordered locus">swp_3849</name>
</gene>
<sequence>MTEQAEDALPISFTDAAALKVKTLLDEEENDALKLRVYVTGGGCSGFQYGFTFDEKVNEGDFTVEKQGVQLVVDPMSLQYLVGGEVDYTSGLEGSRFFVKNPNATTTCGCGASFSV</sequence>
<comment type="function">
    <text evidence="1">Required for insertion of 4Fe-4S clusters for at least IspG.</text>
</comment>
<comment type="cofactor">
    <cofactor evidence="1">
        <name>iron-sulfur cluster</name>
        <dbReference type="ChEBI" id="CHEBI:30408"/>
    </cofactor>
    <text evidence="1">Binds 1 iron-sulfur cluster per subunit.</text>
</comment>
<comment type="subunit">
    <text evidence="1">Homodimer.</text>
</comment>
<comment type="similarity">
    <text evidence="1">Belongs to the HesB/IscA family.</text>
</comment>
<proteinExistence type="inferred from homology"/>
<reference key="1">
    <citation type="journal article" date="2008" name="PLoS ONE">
        <title>Environmental adaptation: genomic analysis of the piezotolerant and psychrotolerant deep-sea iron reducing bacterium Shewanella piezotolerans WP3.</title>
        <authorList>
            <person name="Wang F."/>
            <person name="Wang J."/>
            <person name="Jian H."/>
            <person name="Zhang B."/>
            <person name="Li S."/>
            <person name="Wang F."/>
            <person name="Zeng X."/>
            <person name="Gao L."/>
            <person name="Bartlett D.H."/>
            <person name="Yu J."/>
            <person name="Hu S."/>
            <person name="Xiao X."/>
        </authorList>
    </citation>
    <scope>NUCLEOTIDE SEQUENCE [LARGE SCALE GENOMIC DNA]</scope>
    <source>
        <strain>WP3 / JCM 13877</strain>
    </source>
</reference>
<keyword id="KW-0408">Iron</keyword>
<keyword id="KW-0411">Iron-sulfur</keyword>
<keyword id="KW-0479">Metal-binding</keyword>
<evidence type="ECO:0000255" key="1">
    <source>
        <dbReference type="HAMAP-Rule" id="MF_01380"/>
    </source>
</evidence>
<feature type="chain" id="PRO_1000144937" description="Iron-sulfur cluster insertion protein ErpA">
    <location>
        <begin position="1"/>
        <end position="116"/>
    </location>
</feature>
<feature type="binding site" evidence="1">
    <location>
        <position position="44"/>
    </location>
    <ligand>
        <name>iron-sulfur cluster</name>
        <dbReference type="ChEBI" id="CHEBI:30408"/>
    </ligand>
</feature>
<feature type="binding site" evidence="1">
    <location>
        <position position="108"/>
    </location>
    <ligand>
        <name>iron-sulfur cluster</name>
        <dbReference type="ChEBI" id="CHEBI:30408"/>
    </ligand>
</feature>
<feature type="binding site" evidence="1">
    <location>
        <position position="110"/>
    </location>
    <ligand>
        <name>iron-sulfur cluster</name>
        <dbReference type="ChEBI" id="CHEBI:30408"/>
    </ligand>
</feature>
<name>ERPA_SHEPW</name>
<accession>B8CQR0</accession>